<dbReference type="EMBL" id="AF095640">
    <property type="protein sequence ID" value="AAD13656.1"/>
    <property type="molecule type" value="mRNA"/>
</dbReference>
<dbReference type="EMBL" id="AF109179">
    <property type="protein sequence ID" value="AAD19654.1"/>
    <property type="molecule type" value="mRNA"/>
</dbReference>
<dbReference type="EMBL" id="AF087662">
    <property type="protein sequence ID" value="AAD17798.1"/>
    <property type="molecule type" value="mRNA"/>
</dbReference>
<dbReference type="EMBL" id="AF113951">
    <property type="protein sequence ID" value="AAD17205.1"/>
    <property type="molecule type" value="mRNA"/>
</dbReference>
<dbReference type="EMBL" id="AK133168">
    <property type="protein sequence ID" value="BAE21540.1"/>
    <property type="molecule type" value="mRNA"/>
</dbReference>
<dbReference type="EMBL" id="AC138221">
    <property type="status" value="NOT_ANNOTATED_CDS"/>
    <property type="molecule type" value="Genomic_DNA"/>
</dbReference>
<dbReference type="EMBL" id="BC131685">
    <property type="protein sequence ID" value="AAI31686.1"/>
    <property type="molecule type" value="mRNA"/>
</dbReference>
<dbReference type="CCDS" id="CCDS27797.1"/>
<dbReference type="RefSeq" id="NP_033963.1">
    <property type="nucleotide sequence ID" value="NM_009833.2"/>
</dbReference>
<dbReference type="SMR" id="Q9QWV9"/>
<dbReference type="BioGRID" id="198559">
    <property type="interactions" value="5"/>
</dbReference>
<dbReference type="ComplexPortal" id="CPX-230">
    <property type="entry name" value="Positive transcription elongation factor B, CDK9-cyclinT1 complex"/>
</dbReference>
<dbReference type="CORUM" id="Q9QWV9"/>
<dbReference type="FunCoup" id="Q9QWV9">
    <property type="interactions" value="3903"/>
</dbReference>
<dbReference type="IntAct" id="Q9QWV9">
    <property type="interactions" value="6"/>
</dbReference>
<dbReference type="MINT" id="Q9QWV9"/>
<dbReference type="STRING" id="10090.ENSMUSP00000126874"/>
<dbReference type="GlyGen" id="Q9QWV9">
    <property type="glycosylation" value="1 site"/>
</dbReference>
<dbReference type="iPTMnet" id="Q9QWV9"/>
<dbReference type="PhosphoSitePlus" id="Q9QWV9"/>
<dbReference type="PaxDb" id="10090-ENSMUSP00000126874"/>
<dbReference type="PeptideAtlas" id="Q9QWV9"/>
<dbReference type="ProteomicsDB" id="281342"/>
<dbReference type="Pumba" id="Q9QWV9"/>
<dbReference type="Antibodypedia" id="1442">
    <property type="antibodies" value="292 antibodies from 38 providers"/>
</dbReference>
<dbReference type="DNASU" id="12455"/>
<dbReference type="Ensembl" id="ENSMUST00000012104.7">
    <property type="protein sequence ID" value="ENSMUSP00000012104.7"/>
    <property type="gene ID" value="ENSMUSG00000011960.13"/>
</dbReference>
<dbReference type="Ensembl" id="ENSMUST00000169707.8">
    <property type="protein sequence ID" value="ENSMUSP00000126874.2"/>
    <property type="gene ID" value="ENSMUSG00000011960.13"/>
</dbReference>
<dbReference type="GeneID" id="12455"/>
<dbReference type="KEGG" id="mmu:12455"/>
<dbReference type="UCSC" id="uc007xmv.1">
    <property type="organism name" value="mouse"/>
</dbReference>
<dbReference type="AGR" id="MGI:1328363"/>
<dbReference type="CTD" id="904"/>
<dbReference type="MGI" id="MGI:1328363">
    <property type="gene designation" value="Ccnt1"/>
</dbReference>
<dbReference type="VEuPathDB" id="HostDB:ENSMUSG00000011960"/>
<dbReference type="eggNOG" id="KOG0834">
    <property type="taxonomic scope" value="Eukaryota"/>
</dbReference>
<dbReference type="GeneTree" id="ENSGT00940000159544"/>
<dbReference type="HOGENOM" id="CLU_012994_1_0_1"/>
<dbReference type="InParanoid" id="Q9QWV9"/>
<dbReference type="OMA" id="TWSGKGQ"/>
<dbReference type="OrthoDB" id="25002at2759"/>
<dbReference type="PhylomeDB" id="Q9QWV9"/>
<dbReference type="TreeFam" id="TF101014"/>
<dbReference type="Reactome" id="R-MMU-112382">
    <property type="pathway name" value="Formation of RNA Pol II elongation complex"/>
</dbReference>
<dbReference type="Reactome" id="R-MMU-2173796">
    <property type="pathway name" value="SMAD2/SMAD3:SMAD4 heterotrimer regulates transcription"/>
</dbReference>
<dbReference type="Reactome" id="R-MMU-674695">
    <property type="pathway name" value="RNA Polymerase II Pre-transcription Events"/>
</dbReference>
<dbReference type="Reactome" id="R-MMU-6796648">
    <property type="pathway name" value="TP53 Regulates Transcription of DNA Repair Genes"/>
</dbReference>
<dbReference type="Reactome" id="R-MMU-6807505">
    <property type="pathway name" value="RNA polymerase II transcribes snRNA genes"/>
</dbReference>
<dbReference type="Reactome" id="R-MMU-75955">
    <property type="pathway name" value="RNA Polymerase II Transcription Elongation"/>
</dbReference>
<dbReference type="Reactome" id="R-MMU-9018519">
    <property type="pathway name" value="Estrogen-dependent gene expression"/>
</dbReference>
<dbReference type="BioGRID-ORCS" id="12455">
    <property type="hits" value="17 hits in 80 CRISPR screens"/>
</dbReference>
<dbReference type="ChiTaRS" id="Ccnt1">
    <property type="organism name" value="mouse"/>
</dbReference>
<dbReference type="PRO" id="PR:Q9QWV9"/>
<dbReference type="Proteomes" id="UP000000589">
    <property type="component" value="Chromosome 15"/>
</dbReference>
<dbReference type="RNAct" id="Q9QWV9">
    <property type="molecule type" value="protein"/>
</dbReference>
<dbReference type="Bgee" id="ENSMUSG00000011960">
    <property type="expression patterns" value="Expressed in rostral migratory stream and 253 other cell types or tissues"/>
</dbReference>
<dbReference type="ExpressionAtlas" id="Q9QWV9">
    <property type="expression patterns" value="baseline and differential"/>
</dbReference>
<dbReference type="GO" id="GO:0008024">
    <property type="term" value="C:cyclin/CDK positive transcription elongation factor complex"/>
    <property type="evidence" value="ECO:0000250"/>
    <property type="project" value="UniProtKB"/>
</dbReference>
<dbReference type="GO" id="GO:0005829">
    <property type="term" value="C:cytosol"/>
    <property type="evidence" value="ECO:0007669"/>
    <property type="project" value="Ensembl"/>
</dbReference>
<dbReference type="GO" id="GO:0005634">
    <property type="term" value="C:nucleus"/>
    <property type="evidence" value="ECO:0000314"/>
    <property type="project" value="MGI"/>
</dbReference>
<dbReference type="GO" id="GO:0070691">
    <property type="term" value="C:P-TEFb complex"/>
    <property type="evidence" value="ECO:0000250"/>
    <property type="project" value="UniProtKB"/>
</dbReference>
<dbReference type="GO" id="GO:0097322">
    <property type="term" value="F:7SK snRNA binding"/>
    <property type="evidence" value="ECO:0000250"/>
    <property type="project" value="UniProtKB"/>
</dbReference>
<dbReference type="GO" id="GO:0003682">
    <property type="term" value="F:chromatin binding"/>
    <property type="evidence" value="ECO:0000314"/>
    <property type="project" value="MGI"/>
</dbReference>
<dbReference type="GO" id="GO:0061575">
    <property type="term" value="F:cyclin-dependent protein serine/threonine kinase activator activity"/>
    <property type="evidence" value="ECO:0000250"/>
    <property type="project" value="UniProtKB"/>
</dbReference>
<dbReference type="GO" id="GO:0003677">
    <property type="term" value="F:DNA binding"/>
    <property type="evidence" value="ECO:0000266"/>
    <property type="project" value="MGI"/>
</dbReference>
<dbReference type="GO" id="GO:0140297">
    <property type="term" value="F:DNA-binding transcription factor binding"/>
    <property type="evidence" value="ECO:0007669"/>
    <property type="project" value="Ensembl"/>
</dbReference>
<dbReference type="GO" id="GO:0140693">
    <property type="term" value="F:molecular condensate scaffold activity"/>
    <property type="evidence" value="ECO:0000250"/>
    <property type="project" value="UniProtKB"/>
</dbReference>
<dbReference type="GO" id="GO:0019901">
    <property type="term" value="F:protein kinase binding"/>
    <property type="evidence" value="ECO:0000314"/>
    <property type="project" value="MGI"/>
</dbReference>
<dbReference type="GO" id="GO:0070063">
    <property type="term" value="F:RNA polymerase binding"/>
    <property type="evidence" value="ECO:0007669"/>
    <property type="project" value="Ensembl"/>
</dbReference>
<dbReference type="GO" id="GO:0017069">
    <property type="term" value="F:snRNA binding"/>
    <property type="evidence" value="ECO:0000314"/>
    <property type="project" value="MGI"/>
</dbReference>
<dbReference type="GO" id="GO:0000976">
    <property type="term" value="F:transcription cis-regulatory region binding"/>
    <property type="evidence" value="ECO:0000314"/>
    <property type="project" value="BHF-UCL"/>
</dbReference>
<dbReference type="GO" id="GO:0051301">
    <property type="term" value="P:cell division"/>
    <property type="evidence" value="ECO:0007669"/>
    <property type="project" value="UniProtKB-KW"/>
</dbReference>
<dbReference type="GO" id="GO:0043923">
    <property type="term" value="P:positive regulation by host of viral transcription"/>
    <property type="evidence" value="ECO:0007669"/>
    <property type="project" value="Ensembl"/>
</dbReference>
<dbReference type="GO" id="GO:0032968">
    <property type="term" value="P:positive regulation of transcription elongation by RNA polymerase II"/>
    <property type="evidence" value="ECO:0000250"/>
    <property type="project" value="UniProtKB"/>
</dbReference>
<dbReference type="GO" id="GO:0009410">
    <property type="term" value="P:response to xenobiotic stimulus"/>
    <property type="evidence" value="ECO:0007669"/>
    <property type="project" value="Ensembl"/>
</dbReference>
<dbReference type="CDD" id="cd20597">
    <property type="entry name" value="CYCLIN_CCNT1_rpt2"/>
    <property type="match status" value="1"/>
</dbReference>
<dbReference type="FunFam" id="1.10.472.10:FF:000004">
    <property type="entry name" value="Cyclin T2"/>
    <property type="match status" value="1"/>
</dbReference>
<dbReference type="FunFam" id="1.10.472.10:FF:000009">
    <property type="entry name" value="cyclin-T2 isoform X1"/>
    <property type="match status" value="1"/>
</dbReference>
<dbReference type="Gene3D" id="1.10.472.10">
    <property type="entry name" value="Cyclin-like"/>
    <property type="match status" value="2"/>
</dbReference>
<dbReference type="InterPro" id="IPR013763">
    <property type="entry name" value="Cyclin-like_dom"/>
</dbReference>
<dbReference type="InterPro" id="IPR036915">
    <property type="entry name" value="Cyclin-like_sf"/>
</dbReference>
<dbReference type="InterPro" id="IPR043198">
    <property type="entry name" value="Cyclin/Ssn8"/>
</dbReference>
<dbReference type="InterPro" id="IPR047320">
    <property type="entry name" value="CYCLIN_CCNT1_rpt2"/>
</dbReference>
<dbReference type="InterPro" id="IPR006671">
    <property type="entry name" value="Cyclin_N"/>
</dbReference>
<dbReference type="PANTHER" id="PTHR10026">
    <property type="entry name" value="CYCLIN"/>
    <property type="match status" value="1"/>
</dbReference>
<dbReference type="Pfam" id="PF00134">
    <property type="entry name" value="Cyclin_N"/>
    <property type="match status" value="1"/>
</dbReference>
<dbReference type="Pfam" id="PF21797">
    <property type="entry name" value="CycT2-like_C"/>
    <property type="match status" value="1"/>
</dbReference>
<dbReference type="SMART" id="SM00385">
    <property type="entry name" value="CYCLIN"/>
    <property type="match status" value="1"/>
</dbReference>
<dbReference type="SUPFAM" id="SSF47954">
    <property type="entry name" value="Cyclin-like"/>
    <property type="match status" value="2"/>
</dbReference>
<accession>Q9QWV9</accession>
<accession>Q3V0G4</accession>
<accession>Q9Z0U7</accession>
<gene>
    <name type="primary">Ccnt1</name>
</gene>
<reference key="1">
    <citation type="journal article" date="1998" name="EMBO J.">
        <title>Recruitment of a protein complex containing Tat and cyclin T1 to TAR governs the species specificity of HIV-1 Tat.</title>
        <authorList>
            <person name="Bieniasz P.D."/>
            <person name="Grdina T.A."/>
            <person name="Bogerd H.P."/>
            <person name="Cullen B.R."/>
        </authorList>
    </citation>
    <scope>NUCLEOTIDE SEQUENCE [MRNA]</scope>
    <source>
        <strain>BALB/cJ</strain>
    </source>
</reference>
<reference key="2">
    <citation type="journal article" date="1998" name="Genes Dev.">
        <title>The interaction between HIV-1 Tat and human cyclin T1 requires zinc and a critical cysteine residue that is not conserved in the murine CycT1 protein.</title>
        <authorList>
            <person name="Garber M.E."/>
            <person name="Wei P."/>
            <person name="KewalRamani V.N."/>
            <person name="Mayall T.P."/>
            <person name="Herrmann C.H."/>
            <person name="Rice A.P."/>
            <person name="Littman D.R."/>
            <person name="Jones K.A."/>
        </authorList>
    </citation>
    <scope>NUCLEOTIDE SEQUENCE [MRNA]</scope>
    <scope>MUTAGENESIS OF TYR-261</scope>
    <source>
        <strain>C57BL/6J</strain>
        <tissue>Brain</tissue>
    </source>
</reference>
<reference key="3">
    <citation type="journal article" date="1999" name="J. Mol. Biol.">
        <title>Role of the human and murine cyclin T proteins in regulating HIV-1 Tat-activation.</title>
        <authorList>
            <person name="Kwak Y.T."/>
            <person name="Ivanov D."/>
            <person name="Guo J."/>
            <person name="Nee E."/>
            <person name="Gaynor R.B."/>
        </authorList>
    </citation>
    <scope>NUCLEOTIDE SEQUENCE [MRNA]</scope>
    <scope>MUTAGENESIS OF ARG-256; TYR-261; GLN-262; MET-265 AND ASN-277</scope>
    <source>
        <tissue>Spleen</tissue>
    </source>
</reference>
<reference key="4">
    <citation type="journal article" date="1999" name="Proc. Natl. Acad. Sci. U.S.A.">
        <title>Interactions between human cyclin T, Tat, and the transactivation response element (TAR) are disrupted by a cysteine to tyrosine substitution found in mouse cyclin T.</title>
        <authorList>
            <person name="Fujinaga K."/>
            <person name="Taube R."/>
            <person name="Wimmer J."/>
            <person name="Cujec T.P."/>
            <person name="Peterlin B.M."/>
        </authorList>
    </citation>
    <scope>NUCLEOTIDE SEQUENCE [MRNA]</scope>
    <scope>MUTAGENESIS OF ARG-256; TYR-261; GLN-262; MET-265 AND ASN-277</scope>
    <source>
        <tissue>Fibroblast</tissue>
    </source>
</reference>
<reference key="5">
    <citation type="journal article" date="2005" name="Science">
        <title>The transcriptional landscape of the mammalian genome.</title>
        <authorList>
            <person name="Carninci P."/>
            <person name="Kasukawa T."/>
            <person name="Katayama S."/>
            <person name="Gough J."/>
            <person name="Frith M.C."/>
            <person name="Maeda N."/>
            <person name="Oyama R."/>
            <person name="Ravasi T."/>
            <person name="Lenhard B."/>
            <person name="Wells C."/>
            <person name="Kodzius R."/>
            <person name="Shimokawa K."/>
            <person name="Bajic V.B."/>
            <person name="Brenner S.E."/>
            <person name="Batalov S."/>
            <person name="Forrest A.R."/>
            <person name="Zavolan M."/>
            <person name="Davis M.J."/>
            <person name="Wilming L.G."/>
            <person name="Aidinis V."/>
            <person name="Allen J.E."/>
            <person name="Ambesi-Impiombato A."/>
            <person name="Apweiler R."/>
            <person name="Aturaliya R.N."/>
            <person name="Bailey T.L."/>
            <person name="Bansal M."/>
            <person name="Baxter L."/>
            <person name="Beisel K.W."/>
            <person name="Bersano T."/>
            <person name="Bono H."/>
            <person name="Chalk A.M."/>
            <person name="Chiu K.P."/>
            <person name="Choudhary V."/>
            <person name="Christoffels A."/>
            <person name="Clutterbuck D.R."/>
            <person name="Crowe M.L."/>
            <person name="Dalla E."/>
            <person name="Dalrymple B.P."/>
            <person name="de Bono B."/>
            <person name="Della Gatta G."/>
            <person name="di Bernardo D."/>
            <person name="Down T."/>
            <person name="Engstrom P."/>
            <person name="Fagiolini M."/>
            <person name="Faulkner G."/>
            <person name="Fletcher C.F."/>
            <person name="Fukushima T."/>
            <person name="Furuno M."/>
            <person name="Futaki S."/>
            <person name="Gariboldi M."/>
            <person name="Georgii-Hemming P."/>
            <person name="Gingeras T.R."/>
            <person name="Gojobori T."/>
            <person name="Green R.E."/>
            <person name="Gustincich S."/>
            <person name="Harbers M."/>
            <person name="Hayashi Y."/>
            <person name="Hensch T.K."/>
            <person name="Hirokawa N."/>
            <person name="Hill D."/>
            <person name="Huminiecki L."/>
            <person name="Iacono M."/>
            <person name="Ikeo K."/>
            <person name="Iwama A."/>
            <person name="Ishikawa T."/>
            <person name="Jakt M."/>
            <person name="Kanapin A."/>
            <person name="Katoh M."/>
            <person name="Kawasawa Y."/>
            <person name="Kelso J."/>
            <person name="Kitamura H."/>
            <person name="Kitano H."/>
            <person name="Kollias G."/>
            <person name="Krishnan S.P."/>
            <person name="Kruger A."/>
            <person name="Kummerfeld S.K."/>
            <person name="Kurochkin I.V."/>
            <person name="Lareau L.F."/>
            <person name="Lazarevic D."/>
            <person name="Lipovich L."/>
            <person name="Liu J."/>
            <person name="Liuni S."/>
            <person name="McWilliam S."/>
            <person name="Madan Babu M."/>
            <person name="Madera M."/>
            <person name="Marchionni L."/>
            <person name="Matsuda H."/>
            <person name="Matsuzawa S."/>
            <person name="Miki H."/>
            <person name="Mignone F."/>
            <person name="Miyake S."/>
            <person name="Morris K."/>
            <person name="Mottagui-Tabar S."/>
            <person name="Mulder N."/>
            <person name="Nakano N."/>
            <person name="Nakauchi H."/>
            <person name="Ng P."/>
            <person name="Nilsson R."/>
            <person name="Nishiguchi S."/>
            <person name="Nishikawa S."/>
            <person name="Nori F."/>
            <person name="Ohara O."/>
            <person name="Okazaki Y."/>
            <person name="Orlando V."/>
            <person name="Pang K.C."/>
            <person name="Pavan W.J."/>
            <person name="Pavesi G."/>
            <person name="Pesole G."/>
            <person name="Petrovsky N."/>
            <person name="Piazza S."/>
            <person name="Reed J."/>
            <person name="Reid J.F."/>
            <person name="Ring B.Z."/>
            <person name="Ringwald M."/>
            <person name="Rost B."/>
            <person name="Ruan Y."/>
            <person name="Salzberg S.L."/>
            <person name="Sandelin A."/>
            <person name="Schneider C."/>
            <person name="Schoenbach C."/>
            <person name="Sekiguchi K."/>
            <person name="Semple C.A."/>
            <person name="Seno S."/>
            <person name="Sessa L."/>
            <person name="Sheng Y."/>
            <person name="Shibata Y."/>
            <person name="Shimada H."/>
            <person name="Shimada K."/>
            <person name="Silva D."/>
            <person name="Sinclair B."/>
            <person name="Sperling S."/>
            <person name="Stupka E."/>
            <person name="Sugiura K."/>
            <person name="Sultana R."/>
            <person name="Takenaka Y."/>
            <person name="Taki K."/>
            <person name="Tammoja K."/>
            <person name="Tan S.L."/>
            <person name="Tang S."/>
            <person name="Taylor M.S."/>
            <person name="Tegner J."/>
            <person name="Teichmann S.A."/>
            <person name="Ueda H.R."/>
            <person name="van Nimwegen E."/>
            <person name="Verardo R."/>
            <person name="Wei C.L."/>
            <person name="Yagi K."/>
            <person name="Yamanishi H."/>
            <person name="Zabarovsky E."/>
            <person name="Zhu S."/>
            <person name="Zimmer A."/>
            <person name="Hide W."/>
            <person name="Bult C."/>
            <person name="Grimmond S.M."/>
            <person name="Teasdale R.D."/>
            <person name="Liu E.T."/>
            <person name="Brusic V."/>
            <person name="Quackenbush J."/>
            <person name="Wahlestedt C."/>
            <person name="Mattick J.S."/>
            <person name="Hume D.A."/>
            <person name="Kai C."/>
            <person name="Sasaki D."/>
            <person name="Tomaru Y."/>
            <person name="Fukuda S."/>
            <person name="Kanamori-Katayama M."/>
            <person name="Suzuki M."/>
            <person name="Aoki J."/>
            <person name="Arakawa T."/>
            <person name="Iida J."/>
            <person name="Imamura K."/>
            <person name="Itoh M."/>
            <person name="Kato T."/>
            <person name="Kawaji H."/>
            <person name="Kawagashira N."/>
            <person name="Kawashima T."/>
            <person name="Kojima M."/>
            <person name="Kondo S."/>
            <person name="Konno H."/>
            <person name="Nakano K."/>
            <person name="Ninomiya N."/>
            <person name="Nishio T."/>
            <person name="Okada M."/>
            <person name="Plessy C."/>
            <person name="Shibata K."/>
            <person name="Shiraki T."/>
            <person name="Suzuki S."/>
            <person name="Tagami M."/>
            <person name="Waki K."/>
            <person name="Watahiki A."/>
            <person name="Okamura-Oho Y."/>
            <person name="Suzuki H."/>
            <person name="Kawai J."/>
            <person name="Hayashizaki Y."/>
        </authorList>
    </citation>
    <scope>NUCLEOTIDE SEQUENCE [LARGE SCALE MRNA]</scope>
    <source>
        <strain>C57BL/6J</strain>
        <tissue>Testis</tissue>
    </source>
</reference>
<reference key="6">
    <citation type="journal article" date="2009" name="PLoS Biol.">
        <title>Lineage-specific biology revealed by a finished genome assembly of the mouse.</title>
        <authorList>
            <person name="Church D.M."/>
            <person name="Goodstadt L."/>
            <person name="Hillier L.W."/>
            <person name="Zody M.C."/>
            <person name="Goldstein S."/>
            <person name="She X."/>
            <person name="Bult C.J."/>
            <person name="Agarwala R."/>
            <person name="Cherry J.L."/>
            <person name="DiCuccio M."/>
            <person name="Hlavina W."/>
            <person name="Kapustin Y."/>
            <person name="Meric P."/>
            <person name="Maglott D."/>
            <person name="Birtle Z."/>
            <person name="Marques A.C."/>
            <person name="Graves T."/>
            <person name="Zhou S."/>
            <person name="Teague B."/>
            <person name="Potamousis K."/>
            <person name="Churas C."/>
            <person name="Place M."/>
            <person name="Herschleb J."/>
            <person name="Runnheim R."/>
            <person name="Forrest D."/>
            <person name="Amos-Landgraf J."/>
            <person name="Schwartz D.C."/>
            <person name="Cheng Z."/>
            <person name="Lindblad-Toh K."/>
            <person name="Eichler E.E."/>
            <person name="Ponting C.P."/>
        </authorList>
    </citation>
    <scope>NUCLEOTIDE SEQUENCE [LARGE SCALE GENOMIC DNA]</scope>
    <source>
        <strain>C57BL/6J</strain>
    </source>
</reference>
<reference key="7">
    <citation type="journal article" date="2004" name="Genome Res.">
        <title>The status, quality, and expansion of the NIH full-length cDNA project: the Mammalian Gene Collection (MGC).</title>
        <authorList>
            <consortium name="The MGC Project Team"/>
        </authorList>
    </citation>
    <scope>NUCLEOTIDE SEQUENCE [LARGE SCALE MRNA]</scope>
</reference>
<reference key="8">
    <citation type="journal article" date="2016" name="Cell Rep.">
        <title>T-bet activates Th1 genes through mediator and the super elongation complex.</title>
        <authorList>
            <person name="Hertweck A."/>
            <person name="Evans C.M."/>
            <person name="Eskandarpour M."/>
            <person name="Lau J.C."/>
            <person name="Oleinika K."/>
            <person name="Jackson I."/>
            <person name="Kelly A."/>
            <person name="Ambrose J."/>
            <person name="Adamson P."/>
            <person name="Cousins D.J."/>
            <person name="Lavender P."/>
            <person name="Calder V.L."/>
            <person name="Lord G.M."/>
            <person name="Jenner R.G."/>
        </authorList>
    </citation>
    <scope>INTERACTION WITH TBX21 AND CDK9</scope>
</reference>
<keyword id="KW-0007">Acetylation</keyword>
<keyword id="KW-0013">ADP-ribosylation</keyword>
<keyword id="KW-0131">Cell cycle</keyword>
<keyword id="KW-0132">Cell division</keyword>
<keyword id="KW-0175">Coiled coil</keyword>
<keyword id="KW-0195">Cyclin</keyword>
<keyword id="KW-1017">Isopeptide bond</keyword>
<keyword id="KW-0539">Nucleus</keyword>
<keyword id="KW-0597">Phosphoprotein</keyword>
<keyword id="KW-1185">Reference proteome</keyword>
<keyword id="KW-0804">Transcription</keyword>
<keyword id="KW-0805">Transcription regulation</keyword>
<keyword id="KW-0832">Ubl conjugation</keyword>
<evidence type="ECO:0000250" key="1">
    <source>
        <dbReference type="UniProtKB" id="O60563"/>
    </source>
</evidence>
<evidence type="ECO:0000255" key="2"/>
<evidence type="ECO:0000256" key="3">
    <source>
        <dbReference type="SAM" id="MobiDB-lite"/>
    </source>
</evidence>
<evidence type="ECO:0000269" key="4">
    <source>
    </source>
</evidence>
<evidence type="ECO:0000269" key="5">
    <source>
    </source>
</evidence>
<evidence type="ECO:0000269" key="6">
    <source>
    </source>
</evidence>
<evidence type="ECO:0000305" key="7"/>
<proteinExistence type="evidence at protein level"/>
<sequence length="724" mass="80598">MEGERKNNNKRWYFTREQLENSPSRRFGVDSDKELSYRQQAANLLQDMGQRLNVSQLTINTAIVYMHRFYMIQSFTQFHRYSMAPAALFLAAKVEEQPKKLEHVIKVAHTCLHPQESLPDTRSEAYLQQVQDLVILESIILQTLGFELTIDHPHTHVVKCTQLVRASKDLAQTSYFMATNSLHLTTFSLQYTPPVVACVCIHLACKWSNWEIPVSTDGKHWWEYVDATVTLELLDELTHEFLQILEKTPSRLKRIRNWRAYQAAMKTKPDDRGADENTSEQTILNMISQTSSDTTIAGLMSMSTASTSAVPSLPSSEESSSSLTSVDMLQGERWLSSQPPFKLEAAQGHRTSESLALIGVDHSLQQDGSSAFGSQKQASKSVPSAKVSLKEYRAKHAEELAAQKRQLENMEANVKSQYAYAAQNLLSHDSHSSVILKMPIESSENPERPFLDKADKSALKMRLPVASGDKAVSSKPEEIKMRIKVHSAGDKHNSIEDSVTKSREHKEKQRTHPSNHHHHHNHHSHRHSHLQLPAGPVSKRPSDPKHSSQTSTLAHKTYSLSSTLSSSSSTRKRGPPEETGAAVFDHPAKIAKSTKSSLNFPFPPLPTMTQLPGHSSDTSGLPFSQPSCKTRVPHMKLDKGPPGANGHNATQSIDYQDTVNMLHSLLSAQGVQPTQAPAFEFVHSYGEYMNPRAGAISSRSGTTDKPRPPPLPSEPPPPLPPLPK</sequence>
<organism>
    <name type="scientific">Mus musculus</name>
    <name type="common">Mouse</name>
    <dbReference type="NCBI Taxonomy" id="10090"/>
    <lineage>
        <taxon>Eukaryota</taxon>
        <taxon>Metazoa</taxon>
        <taxon>Chordata</taxon>
        <taxon>Craniata</taxon>
        <taxon>Vertebrata</taxon>
        <taxon>Euteleostomi</taxon>
        <taxon>Mammalia</taxon>
        <taxon>Eutheria</taxon>
        <taxon>Euarchontoglires</taxon>
        <taxon>Glires</taxon>
        <taxon>Rodentia</taxon>
        <taxon>Myomorpha</taxon>
        <taxon>Muroidea</taxon>
        <taxon>Muridae</taxon>
        <taxon>Murinae</taxon>
        <taxon>Mus</taxon>
        <taxon>Mus</taxon>
    </lineage>
</organism>
<comment type="function">
    <text evidence="1">Regulatory subunit of the cyclin-dependent kinase pair (CDK9/cyclin-T1) complex, also called positive transcription elongation factor B (P-TEFb), which facilitates the transition from abortive to productive elongation by phosphorylating the CTD (C-terminal domain) of the large subunit of RNA polymerase II (RNA Pol II). Required to activate the protein kinase activity of CDK9: acts by mediating formation of liquid-liquid phase separation (LLPS) that enhances binding of P-TEFb to the CTD of RNA Pol II.</text>
</comment>
<comment type="subunit">
    <text evidence="1 5">Cyclin-T1 is the predominant cyclin that associates with CDK9 to form a heterodimer called P-TEFb (PubMed:27292648). P-TEFb forms a complex with AFF4/AF5Q31 (By similarity). Component of a complex which is at least composed of HTATSF1/Tat-SF1, P-TEFb complex, RNA pol II, SUPT5H, and NCL/nucleolin (By similarity). Component of the 7SK snRNP complex at least composed of P-TEFb (composed of CDK9 and CCNT1/cyclin-T1), HEXIM1, HEXIM2, BCDIN3, SART3 proteins and 7SK and U6 snRNAs (By similarity). Interacts (via central region) with ZMYND8 (via N-terminus); the interaction is direct and the association appears to occur between homodimeric ZMYND8 and the activated form of the P-TEFb complex (By similarity). Interacts with BRD4, targets chromatin binding (By similarity). Interacts with JMJD6 (By similarity). Interacts with MDFIC (By similarity). Interacts with HSF1. Interacts with HTATSF1 (By similarity). Interacts with TBX21 (PubMed:27292648).</text>
</comment>
<comment type="interaction">
    <interactant intactId="EBI-2655009">
        <id>Q9QWV9</id>
    </interactant>
    <interactant intactId="EBI-6260929">
        <id>Q91Y44</id>
        <label>Brdt</label>
    </interactant>
    <organismsDiffer>false</organismsDiffer>
    <experiments>2</experiments>
</comment>
<comment type="interaction">
    <interactant intactId="EBI-2655009">
        <id>Q9QWV9</id>
    </interactant>
    <interactant intactId="EBI-1183003">
        <id>P28574</id>
        <label>Max</label>
    </interactant>
    <organismsDiffer>false</organismsDiffer>
    <experiments>2</experiments>
</comment>
<comment type="subcellular location">
    <subcellularLocation>
        <location evidence="1">Nucleus</location>
    </subcellularLocation>
</comment>
<comment type="domain">
    <text evidence="1">The histidine-rich domain (HRD) region is intrinsically disordered and promotes the formation of phase-separated liquid droplets that enhance binding of the P-TEFb complex to the CTD (C-terminal domain) of the large subunit of RNA polymerase II (RNA Pol II).</text>
</comment>
<comment type="PTM">
    <text evidence="1">ADP-ribosylation on serine residues by PARP1 in response to DNA damage disrupts the phase separation activity of CCNT1, thereby preventing activation of CDK9.</text>
</comment>
<comment type="similarity">
    <text evidence="7">Belongs to the cyclin family. Cyclin C subfamily.</text>
</comment>
<protein>
    <recommendedName>
        <fullName>Cyclin-T1</fullName>
        <shortName>CycT1</shortName>
        <shortName>Cyclin-T</shortName>
    </recommendedName>
</protein>
<feature type="chain" id="PRO_0000080493" description="Cyclin-T1">
    <location>
        <begin position="1"/>
        <end position="724"/>
    </location>
</feature>
<feature type="region of interest" description="Histidine-rich domain (HRD)" evidence="1">
    <location>
        <begin position="479"/>
        <end position="549"/>
    </location>
</feature>
<feature type="region of interest" description="Disordered" evidence="3">
    <location>
        <begin position="483"/>
        <end position="586"/>
    </location>
</feature>
<feature type="region of interest" description="Disordered" evidence="3">
    <location>
        <begin position="691"/>
        <end position="724"/>
    </location>
</feature>
<feature type="coiled-coil region" evidence="2">
    <location>
        <begin position="384"/>
        <end position="425"/>
    </location>
</feature>
<feature type="short sequence motif" description="Nuclear localization signal" evidence="2">
    <location>
        <begin position="253"/>
        <end position="270"/>
    </location>
</feature>
<feature type="compositionally biased region" description="Basic and acidic residues" evidence="3">
    <location>
        <begin position="483"/>
        <end position="507"/>
    </location>
</feature>
<feature type="compositionally biased region" description="Basic residues" evidence="3">
    <location>
        <begin position="508"/>
        <end position="529"/>
    </location>
</feature>
<feature type="compositionally biased region" description="Low complexity" evidence="3">
    <location>
        <begin position="559"/>
        <end position="569"/>
    </location>
</feature>
<feature type="compositionally biased region" description="Pro residues" evidence="3">
    <location>
        <begin position="708"/>
        <end position="724"/>
    </location>
</feature>
<feature type="modified residue" description="Phosphoserine" evidence="1">
    <location>
        <position position="117"/>
    </location>
</feature>
<feature type="modified residue" description="Phosphoserine" evidence="1">
    <location>
        <position position="388"/>
    </location>
</feature>
<feature type="modified residue" description="N6-acetyllysine" evidence="1">
    <location>
        <position position="390"/>
    </location>
</feature>
<feature type="modified residue" description="ADP-ribosylserine" evidence="1">
    <location>
        <position position="416"/>
    </location>
</feature>
<feature type="modified residue" description="ADP-ribosylserine" evidence="1">
    <location>
        <position position="473"/>
    </location>
</feature>
<feature type="modified residue" description="ADP-ribosylserine" evidence="1">
    <location>
        <position position="474"/>
    </location>
</feature>
<feature type="modified residue" description="N6-(ADP-ribosyl)lysine" evidence="1">
    <location>
        <position position="484"/>
    </location>
</feature>
<feature type="modified residue" description="ADP-ribosylhistidine" evidence="1">
    <location>
        <position position="486"/>
    </location>
</feature>
<feature type="modified residue" description="Phosphoserine" evidence="1">
    <location>
        <position position="494"/>
    </location>
</feature>
<feature type="modified residue" description="Phosphoserine" evidence="1">
    <location>
        <position position="498"/>
    </location>
</feature>
<feature type="modified residue" description="ADP-ribosylhistidine" evidence="1">
    <location>
        <position position="529"/>
    </location>
</feature>
<feature type="modified residue" description="ADP-ribosylserine" evidence="1">
    <location>
        <position position="548"/>
    </location>
</feature>
<feature type="modified residue" description="ADP-ribosylserine" evidence="1">
    <location>
        <position position="551"/>
    </location>
</feature>
<feature type="modified residue" description="ADP-ribosylhistidine" evidence="1">
    <location>
        <position position="555"/>
    </location>
</feature>
<feature type="modified residue" description="ADP-ribosylserine" evidence="1">
    <location>
        <position position="562"/>
    </location>
</feature>
<feature type="cross-link" description="Glycyl lysine isopeptide (Lys-Gly) (interchain with G-Cter in SUMO2)" evidence="1">
    <location>
        <position position="342"/>
    </location>
</feature>
<feature type="cross-link" description="Glycyl lysine isopeptide (Lys-Gly) (interchain with G-Cter in SUMO2)" evidence="1">
    <location>
        <position position="415"/>
    </location>
</feature>
<feature type="cross-link" description="Glycyl lysine isopeptide (Lys-Gly) (interchain with G-Cter in SUMO2)" evidence="1">
    <location>
        <position position="480"/>
    </location>
</feature>
<feature type="mutagenesis site" description="No effect." evidence="4">
    <original>R</original>
    <variation>W</variation>
    <location>
        <position position="256"/>
    </location>
</feature>
<feature type="mutagenesis site" description="Binding to HIV-1 Tat similar to human CCNT1." evidence="4 6">
    <original>Y</original>
    <variation>C</variation>
    <location>
        <position position="261"/>
    </location>
</feature>
<feature type="mutagenesis site" description="No effect." evidence="4">
    <original>Q</original>
    <variation>E</variation>
    <location>
        <position position="262"/>
    </location>
</feature>
<feature type="mutagenesis site" description="No effect." evidence="4">
    <original>M</original>
    <variation>K</variation>
    <location>
        <position position="265"/>
    </location>
</feature>
<feature type="mutagenesis site" description="No effect." evidence="4">
    <original>N</original>
    <variation>K</variation>
    <location>
        <position position="277"/>
    </location>
</feature>
<feature type="sequence conflict" description="In Ref. 3; AAD19654." evidence="7" ref="3">
    <original>M</original>
    <variation>V</variation>
    <location>
        <position position="48"/>
    </location>
</feature>
<feature type="sequence conflict" description="In Ref. 4; AAD17205." evidence="7" ref="4">
    <original>S</original>
    <variation>F</variation>
    <location>
        <position position="567"/>
    </location>
</feature>
<name>CCNT1_MOUSE</name>